<reference key="1">
    <citation type="journal article" date="2004" name="Proc. Natl. Acad. Sci. U.S.A.">
        <title>The diploid genome sequence of Candida albicans.</title>
        <authorList>
            <person name="Jones T."/>
            <person name="Federspiel N.A."/>
            <person name="Chibana H."/>
            <person name="Dungan J."/>
            <person name="Kalman S."/>
            <person name="Magee B.B."/>
            <person name="Newport G."/>
            <person name="Thorstenson Y.R."/>
            <person name="Agabian N."/>
            <person name="Magee P.T."/>
            <person name="Davis R.W."/>
            <person name="Scherer S."/>
        </authorList>
    </citation>
    <scope>NUCLEOTIDE SEQUENCE [LARGE SCALE GENOMIC DNA]</scope>
    <source>
        <strain>SC5314 / ATCC MYA-2876</strain>
    </source>
</reference>
<reference key="2">
    <citation type="journal article" date="2007" name="Genome Biol.">
        <title>Assembly of the Candida albicans genome into sixteen supercontigs aligned on the eight chromosomes.</title>
        <authorList>
            <person name="van het Hoog M."/>
            <person name="Rast T.J."/>
            <person name="Martchenko M."/>
            <person name="Grindle S."/>
            <person name="Dignard D."/>
            <person name="Hogues H."/>
            <person name="Cuomo C."/>
            <person name="Berriman M."/>
            <person name="Scherer S."/>
            <person name="Magee B.B."/>
            <person name="Whiteway M."/>
            <person name="Chibana H."/>
            <person name="Nantel A."/>
            <person name="Magee P.T."/>
        </authorList>
    </citation>
    <scope>GENOME REANNOTATION</scope>
    <source>
        <strain>SC5314 / ATCC MYA-2876</strain>
    </source>
</reference>
<reference key="3">
    <citation type="journal article" date="2013" name="Genome Biol.">
        <title>Assembly of a phased diploid Candida albicans genome facilitates allele-specific measurements and provides a simple model for repeat and indel structure.</title>
        <authorList>
            <person name="Muzzey D."/>
            <person name="Schwartz K."/>
            <person name="Weissman J.S."/>
            <person name="Sherlock G."/>
        </authorList>
    </citation>
    <scope>NUCLEOTIDE SEQUENCE [LARGE SCALE GENOMIC DNA]</scope>
    <scope>GENOME REANNOTATION</scope>
    <source>
        <strain>SC5314 / ATCC MYA-2876</strain>
    </source>
</reference>
<dbReference type="EC" id="2.7.12.2"/>
<dbReference type="EMBL" id="CP017630">
    <property type="protein sequence ID" value="AOW31128.1"/>
    <property type="molecule type" value="Genomic_DNA"/>
</dbReference>
<dbReference type="RefSeq" id="XP_717333.2">
    <property type="nucleotide sequence ID" value="XM_712240.2"/>
</dbReference>
<dbReference type="SMR" id="Q5A6T5"/>
<dbReference type="BioGRID" id="1223967">
    <property type="interactions" value="4"/>
</dbReference>
<dbReference type="FunCoup" id="Q5A6T5">
    <property type="interactions" value="521"/>
</dbReference>
<dbReference type="STRING" id="237561.Q5A6T5"/>
<dbReference type="EnsemblFungi" id="CR_03900W_A-T">
    <property type="protein sequence ID" value="CR_03900W_A-T-p1"/>
    <property type="gene ID" value="CR_03900W_A"/>
</dbReference>
<dbReference type="GeneID" id="3640953"/>
<dbReference type="KEGG" id="cal:CAALFM_CR03900WA"/>
<dbReference type="CGD" id="CAL0000197730">
    <property type="gene designation" value="HST7"/>
</dbReference>
<dbReference type="VEuPathDB" id="FungiDB:CR_03900W_A"/>
<dbReference type="eggNOG" id="KOG0581">
    <property type="taxonomic scope" value="Eukaryota"/>
</dbReference>
<dbReference type="HOGENOM" id="CLU_000288_63_23_1"/>
<dbReference type="InParanoid" id="Q5A6T5"/>
<dbReference type="OrthoDB" id="10252354at2759"/>
<dbReference type="PRO" id="PR:Q5A6T5"/>
<dbReference type="Proteomes" id="UP000000559">
    <property type="component" value="Chromosome R"/>
</dbReference>
<dbReference type="GO" id="GO:0005524">
    <property type="term" value="F:ATP binding"/>
    <property type="evidence" value="ECO:0007669"/>
    <property type="project" value="UniProtKB-KW"/>
</dbReference>
<dbReference type="GO" id="GO:0004708">
    <property type="term" value="F:MAP kinase kinase activity"/>
    <property type="evidence" value="ECO:0000316"/>
    <property type="project" value="CGD"/>
</dbReference>
<dbReference type="GO" id="GO:0106310">
    <property type="term" value="F:protein serine kinase activity"/>
    <property type="evidence" value="ECO:0007669"/>
    <property type="project" value="RHEA"/>
</dbReference>
<dbReference type="GO" id="GO:0004674">
    <property type="term" value="F:protein serine/threonine kinase activity"/>
    <property type="evidence" value="ECO:0007669"/>
    <property type="project" value="UniProtKB-KW"/>
</dbReference>
<dbReference type="GO" id="GO:0004713">
    <property type="term" value="F:protein tyrosine kinase activity"/>
    <property type="evidence" value="ECO:0007669"/>
    <property type="project" value="RHEA"/>
</dbReference>
<dbReference type="GO" id="GO:0009267">
    <property type="term" value="P:cellular response to starvation"/>
    <property type="evidence" value="ECO:0000315"/>
    <property type="project" value="CGD"/>
</dbReference>
<dbReference type="GO" id="GO:0030447">
    <property type="term" value="P:filamentous growth"/>
    <property type="evidence" value="ECO:0000315"/>
    <property type="project" value="CGD"/>
</dbReference>
<dbReference type="GO" id="GO:0044182">
    <property type="term" value="P:filamentous growth of a population of unicellular organisms"/>
    <property type="evidence" value="ECO:0000315"/>
    <property type="project" value="CGD"/>
</dbReference>
<dbReference type="GO" id="GO:0036170">
    <property type="term" value="P:filamentous growth of a population of unicellular organisms in response to starvation"/>
    <property type="evidence" value="ECO:0000315"/>
    <property type="project" value="CGD"/>
</dbReference>
<dbReference type="GO" id="GO:0031505">
    <property type="term" value="P:fungal-type cell wall organization"/>
    <property type="evidence" value="ECO:0000315"/>
    <property type="project" value="CGD"/>
</dbReference>
<dbReference type="GO" id="GO:0000165">
    <property type="term" value="P:MAPK cascade"/>
    <property type="evidence" value="ECO:0000316"/>
    <property type="project" value="CGD"/>
</dbReference>
<dbReference type="GO" id="GO:1990277">
    <property type="term" value="P:parasexual reproduction with cellular fusion"/>
    <property type="evidence" value="ECO:0000315"/>
    <property type="project" value="CGD"/>
</dbReference>
<dbReference type="GO" id="GO:0071507">
    <property type="term" value="P:pheromone response MAPK cascade"/>
    <property type="evidence" value="ECO:0000315"/>
    <property type="project" value="CGD"/>
</dbReference>
<dbReference type="GO" id="GO:1900436">
    <property type="term" value="P:positive regulation of filamentous growth of a population of unicellular organisms in response to starvation"/>
    <property type="evidence" value="ECO:0000315"/>
    <property type="project" value="CGD"/>
</dbReference>
<dbReference type="CDD" id="cd06620">
    <property type="entry name" value="PKc_Byr1_like"/>
    <property type="match status" value="1"/>
</dbReference>
<dbReference type="FunFam" id="1.10.510.10:FF:001756">
    <property type="entry name" value="Serine/threonine-protein kinase STE7 homolog"/>
    <property type="match status" value="1"/>
</dbReference>
<dbReference type="FunFam" id="3.30.200.20:FF:001022">
    <property type="entry name" value="Serine/threonine-protein kinase STE7 homolog"/>
    <property type="match status" value="1"/>
</dbReference>
<dbReference type="Gene3D" id="3.30.200.20">
    <property type="entry name" value="Phosphorylase Kinase, domain 1"/>
    <property type="match status" value="1"/>
</dbReference>
<dbReference type="Gene3D" id="1.10.510.10">
    <property type="entry name" value="Transferase(Phosphotransferase) domain 1"/>
    <property type="match status" value="1"/>
</dbReference>
<dbReference type="InterPro" id="IPR049613">
    <property type="entry name" value="Byr1-like_cat"/>
</dbReference>
<dbReference type="InterPro" id="IPR011009">
    <property type="entry name" value="Kinase-like_dom_sf"/>
</dbReference>
<dbReference type="InterPro" id="IPR050915">
    <property type="entry name" value="MAP_kinase_kinase"/>
</dbReference>
<dbReference type="InterPro" id="IPR000719">
    <property type="entry name" value="Prot_kinase_dom"/>
</dbReference>
<dbReference type="InterPro" id="IPR017441">
    <property type="entry name" value="Protein_kinase_ATP_BS"/>
</dbReference>
<dbReference type="InterPro" id="IPR008271">
    <property type="entry name" value="Ser/Thr_kinase_AS"/>
</dbReference>
<dbReference type="PANTHER" id="PTHR47448">
    <property type="entry name" value="DUAL SPECIFICITY MITOGEN-ACTIVATED PROTEIN KINASE KINASE DSOR1-LIKE PROTEIN"/>
    <property type="match status" value="1"/>
</dbReference>
<dbReference type="PANTHER" id="PTHR47448:SF1">
    <property type="entry name" value="SERINE_THREONINE-PROTEIN KINASE STE7 HOMOLOG"/>
    <property type="match status" value="1"/>
</dbReference>
<dbReference type="Pfam" id="PF00069">
    <property type="entry name" value="Pkinase"/>
    <property type="match status" value="1"/>
</dbReference>
<dbReference type="SMART" id="SM00220">
    <property type="entry name" value="S_TKc"/>
    <property type="match status" value="1"/>
</dbReference>
<dbReference type="SUPFAM" id="SSF56112">
    <property type="entry name" value="Protein kinase-like (PK-like)"/>
    <property type="match status" value="1"/>
</dbReference>
<dbReference type="PROSITE" id="PS00107">
    <property type="entry name" value="PROTEIN_KINASE_ATP"/>
    <property type="match status" value="1"/>
</dbReference>
<dbReference type="PROSITE" id="PS50011">
    <property type="entry name" value="PROTEIN_KINASE_DOM"/>
    <property type="match status" value="1"/>
</dbReference>
<dbReference type="PROSITE" id="PS00108">
    <property type="entry name" value="PROTEIN_KINASE_ST"/>
    <property type="match status" value="1"/>
</dbReference>
<comment type="catalytic activity">
    <reaction>
        <text>L-seryl-[protein] + ATP = O-phospho-L-seryl-[protein] + ADP + H(+)</text>
        <dbReference type="Rhea" id="RHEA:17989"/>
        <dbReference type="Rhea" id="RHEA-COMP:9863"/>
        <dbReference type="Rhea" id="RHEA-COMP:11604"/>
        <dbReference type="ChEBI" id="CHEBI:15378"/>
        <dbReference type="ChEBI" id="CHEBI:29999"/>
        <dbReference type="ChEBI" id="CHEBI:30616"/>
        <dbReference type="ChEBI" id="CHEBI:83421"/>
        <dbReference type="ChEBI" id="CHEBI:456216"/>
        <dbReference type="EC" id="2.7.12.2"/>
    </reaction>
</comment>
<comment type="catalytic activity">
    <reaction>
        <text>L-threonyl-[protein] + ATP = O-phospho-L-threonyl-[protein] + ADP + H(+)</text>
        <dbReference type="Rhea" id="RHEA:46608"/>
        <dbReference type="Rhea" id="RHEA-COMP:11060"/>
        <dbReference type="Rhea" id="RHEA-COMP:11605"/>
        <dbReference type="ChEBI" id="CHEBI:15378"/>
        <dbReference type="ChEBI" id="CHEBI:30013"/>
        <dbReference type="ChEBI" id="CHEBI:30616"/>
        <dbReference type="ChEBI" id="CHEBI:61977"/>
        <dbReference type="ChEBI" id="CHEBI:456216"/>
        <dbReference type="EC" id="2.7.12.2"/>
    </reaction>
</comment>
<comment type="catalytic activity">
    <reaction>
        <text>L-tyrosyl-[protein] + ATP = O-phospho-L-tyrosyl-[protein] + ADP + H(+)</text>
        <dbReference type="Rhea" id="RHEA:10596"/>
        <dbReference type="Rhea" id="RHEA-COMP:10136"/>
        <dbReference type="Rhea" id="RHEA-COMP:20101"/>
        <dbReference type="ChEBI" id="CHEBI:15378"/>
        <dbReference type="ChEBI" id="CHEBI:30616"/>
        <dbReference type="ChEBI" id="CHEBI:46858"/>
        <dbReference type="ChEBI" id="CHEBI:61978"/>
        <dbReference type="ChEBI" id="CHEBI:456216"/>
        <dbReference type="EC" id="2.7.12.2"/>
    </reaction>
</comment>
<comment type="similarity">
    <text evidence="5">Belongs to the protein kinase superfamily. STE Ser/Thr protein kinase family. MAP kinase kinase subfamily.</text>
</comment>
<keyword id="KW-0067">ATP-binding</keyword>
<keyword id="KW-0418">Kinase</keyword>
<keyword id="KW-0547">Nucleotide-binding</keyword>
<keyword id="KW-0597">Phosphoprotein</keyword>
<keyword id="KW-1185">Reference proteome</keyword>
<keyword id="KW-0723">Serine/threonine-protein kinase</keyword>
<keyword id="KW-0808">Transferase</keyword>
<sequence>MTRTTRIDTQEATKHKDLPPVPSPLSLSSNPNPECLMESKSLGRKNFKKLSLDASPVKSTSGSLRSSDMMSIKEPTSLRQKRQRPPPILHLPTASSSATSTPTSNITGSSSASSIQFAQKSPGSGVIVSQTLSRPSSAGGIPSSGYSSLNVNQSNRNVDPDNVVSTDMILNQISNLDLTSMNHHRQHYQNSHHHLPTTNRKRQTVISSISPTKSSAASSSLEPQIQSLPASSQSPIATTSSLKLNNKDLLTLKQLGSGNSGSVSKILHIPTQKTMAKKIIHIDSKSVIQTQIIRELRILHECHSPYIIEFYGACLNNNNTIVICMEYCNCGSLDKILPLCENKQFPTFVLKKLSFAILSGLTYLYTTHKIIHRDIKPNNVLMTHKGEFKLCDFGVSRELTNSLAMADTFVGTSMYMSPERIQGLDYGVKSDVWSTGLMLIELASGVPVWSEDDNNNDDDEDDEDDAYVRQGSIAAERNGQNSPSRSRKNKQKGNGYNSYNGPEGILDLLQRIVNEDAPTLTNKINPVTKLPYDKYLCQFIDLCLIKDDSVRKTPWQLLEDKEHFFKGVEEGVYDKEHKSWAKKIRKCKV</sequence>
<protein>
    <recommendedName>
        <fullName>Serine/threonine-protein kinase STE7 homolog</fullName>
        <ecNumber>2.7.12.2</ecNumber>
    </recommendedName>
</protein>
<gene>
    <name type="primary">HST7</name>
    <name type="synonym">STE7</name>
    <name type="ordered locus">CAALFM_CR03900WA</name>
    <name type="ORF">CaO19.469</name>
    <name type="ORF">CaO19.8100</name>
</gene>
<evidence type="ECO:0000250" key="1"/>
<evidence type="ECO:0000255" key="2">
    <source>
        <dbReference type="PROSITE-ProRule" id="PRU00159"/>
    </source>
</evidence>
<evidence type="ECO:0000255" key="3">
    <source>
        <dbReference type="PROSITE-ProRule" id="PRU10027"/>
    </source>
</evidence>
<evidence type="ECO:0000256" key="4">
    <source>
        <dbReference type="SAM" id="MobiDB-lite"/>
    </source>
</evidence>
<evidence type="ECO:0000305" key="5"/>
<proteinExistence type="inferred from homology"/>
<feature type="chain" id="PRO_0000413042" description="Serine/threonine-protein kinase STE7 homolog">
    <location>
        <begin position="1"/>
        <end position="589"/>
    </location>
</feature>
<feature type="domain" description="Protein kinase" evidence="2">
    <location>
        <begin position="249"/>
        <end position="565"/>
    </location>
</feature>
<feature type="region of interest" description="Disordered" evidence="4">
    <location>
        <begin position="1"/>
        <end position="162"/>
    </location>
</feature>
<feature type="region of interest" description="Disordered" evidence="4">
    <location>
        <begin position="185"/>
        <end position="233"/>
    </location>
</feature>
<feature type="region of interest" description="Disordered" evidence="4">
    <location>
        <begin position="473"/>
        <end position="499"/>
    </location>
</feature>
<feature type="compositionally biased region" description="Basic and acidic residues" evidence="4">
    <location>
        <begin position="1"/>
        <end position="18"/>
    </location>
</feature>
<feature type="compositionally biased region" description="Low complexity" evidence="4">
    <location>
        <begin position="24"/>
        <end position="33"/>
    </location>
</feature>
<feature type="compositionally biased region" description="Polar residues" evidence="4">
    <location>
        <begin position="57"/>
        <end position="69"/>
    </location>
</feature>
<feature type="compositionally biased region" description="Low complexity" evidence="4">
    <location>
        <begin position="92"/>
        <end position="121"/>
    </location>
</feature>
<feature type="compositionally biased region" description="Polar residues" evidence="4">
    <location>
        <begin position="127"/>
        <end position="136"/>
    </location>
</feature>
<feature type="compositionally biased region" description="Polar residues" evidence="4">
    <location>
        <begin position="144"/>
        <end position="162"/>
    </location>
</feature>
<feature type="compositionally biased region" description="Basic residues" evidence="4">
    <location>
        <begin position="185"/>
        <end position="203"/>
    </location>
</feature>
<feature type="compositionally biased region" description="Low complexity" evidence="4">
    <location>
        <begin position="206"/>
        <end position="220"/>
    </location>
</feature>
<feature type="compositionally biased region" description="Polar residues" evidence="4">
    <location>
        <begin position="221"/>
        <end position="233"/>
    </location>
</feature>
<feature type="active site" description="Proton acceptor" evidence="2 3">
    <location>
        <position position="374"/>
    </location>
</feature>
<feature type="binding site" evidence="2">
    <location>
        <begin position="255"/>
        <end position="263"/>
    </location>
    <ligand>
        <name>ATP</name>
        <dbReference type="ChEBI" id="CHEBI:30616"/>
    </ligand>
</feature>
<feature type="binding site" evidence="2">
    <location>
        <position position="278"/>
    </location>
    <ligand>
        <name>ATP</name>
        <dbReference type="ChEBI" id="CHEBI:30616"/>
    </ligand>
</feature>
<feature type="modified residue" description="Phosphoserine" evidence="1">
    <location>
        <position position="402"/>
    </location>
</feature>
<feature type="modified residue" description="Phosphothreonine" evidence="1">
    <location>
        <position position="408"/>
    </location>
</feature>
<organism>
    <name type="scientific">Candida albicans (strain SC5314 / ATCC MYA-2876)</name>
    <name type="common">Yeast</name>
    <dbReference type="NCBI Taxonomy" id="237561"/>
    <lineage>
        <taxon>Eukaryota</taxon>
        <taxon>Fungi</taxon>
        <taxon>Dikarya</taxon>
        <taxon>Ascomycota</taxon>
        <taxon>Saccharomycotina</taxon>
        <taxon>Pichiomycetes</taxon>
        <taxon>Debaryomycetaceae</taxon>
        <taxon>Candida/Lodderomyces clade</taxon>
        <taxon>Candida</taxon>
    </lineage>
</organism>
<name>STE7_CANAL</name>
<accession>Q5A6T5</accession>
<accession>A0A1D8PSL2</accession>